<evidence type="ECO:0000255" key="1">
    <source>
        <dbReference type="HAMAP-Rule" id="MF_01825"/>
    </source>
</evidence>
<evidence type="ECO:0000305" key="2"/>
<proteinExistence type="inferred from homology"/>
<accession>Q57LY4</accession>
<keyword id="KW-0963">Cytoplasm</keyword>
<keyword id="KW-0520">NAD</keyword>
<keyword id="KW-0560">Oxidoreductase</keyword>
<keyword id="KW-0664">Pyridoxine biosynthesis</keyword>
<name>PDXB_SALCH</name>
<feature type="chain" id="PRO_0000297463" description="Erythronate-4-phosphate dehydrogenase">
    <location>
        <begin position="1"/>
        <end position="378"/>
    </location>
</feature>
<feature type="active site" evidence="1">
    <location>
        <position position="208"/>
    </location>
</feature>
<feature type="active site" evidence="1">
    <location>
        <position position="237"/>
    </location>
</feature>
<feature type="active site" description="Proton donor" evidence="1">
    <location>
        <position position="254"/>
    </location>
</feature>
<feature type="binding site" evidence="1">
    <location>
        <position position="45"/>
    </location>
    <ligand>
        <name>substrate</name>
    </ligand>
</feature>
<feature type="binding site" evidence="1">
    <location>
        <position position="66"/>
    </location>
    <ligand>
        <name>substrate</name>
    </ligand>
</feature>
<feature type="binding site" evidence="1">
    <location>
        <position position="146"/>
    </location>
    <ligand>
        <name>NAD(+)</name>
        <dbReference type="ChEBI" id="CHEBI:57540"/>
    </ligand>
</feature>
<feature type="binding site" evidence="1">
    <location>
        <position position="175"/>
    </location>
    <ligand>
        <name>NAD(+)</name>
        <dbReference type="ChEBI" id="CHEBI:57540"/>
    </ligand>
</feature>
<feature type="binding site" evidence="1">
    <location>
        <position position="232"/>
    </location>
    <ligand>
        <name>NAD(+)</name>
        <dbReference type="ChEBI" id="CHEBI:57540"/>
    </ligand>
</feature>
<feature type="binding site" evidence="1">
    <location>
        <position position="257"/>
    </location>
    <ligand>
        <name>NAD(+)</name>
        <dbReference type="ChEBI" id="CHEBI:57540"/>
    </ligand>
</feature>
<feature type="binding site" evidence="1">
    <location>
        <position position="258"/>
    </location>
    <ligand>
        <name>substrate</name>
    </ligand>
</feature>
<protein>
    <recommendedName>
        <fullName evidence="1">Erythronate-4-phosphate dehydrogenase</fullName>
        <ecNumber evidence="1">1.1.1.290</ecNumber>
    </recommendedName>
</protein>
<dbReference type="EC" id="1.1.1.290" evidence="1"/>
<dbReference type="EMBL" id="AE017220">
    <property type="protein sequence ID" value="AAX66278.1"/>
    <property type="status" value="ALT_INIT"/>
    <property type="molecule type" value="Genomic_DNA"/>
</dbReference>
<dbReference type="RefSeq" id="WP_000699178.1">
    <property type="nucleotide sequence ID" value="NC_006905.1"/>
</dbReference>
<dbReference type="SMR" id="Q57LY4"/>
<dbReference type="KEGG" id="sec:SCH_2372"/>
<dbReference type="HOGENOM" id="CLU_019796_4_0_6"/>
<dbReference type="UniPathway" id="UPA00244">
    <property type="reaction ID" value="UER00310"/>
</dbReference>
<dbReference type="Proteomes" id="UP000000538">
    <property type="component" value="Chromosome"/>
</dbReference>
<dbReference type="GO" id="GO:0005829">
    <property type="term" value="C:cytosol"/>
    <property type="evidence" value="ECO:0007669"/>
    <property type="project" value="TreeGrafter"/>
</dbReference>
<dbReference type="GO" id="GO:0033711">
    <property type="term" value="F:4-phosphoerythronate dehydrogenase activity"/>
    <property type="evidence" value="ECO:0007669"/>
    <property type="project" value="UniProtKB-EC"/>
</dbReference>
<dbReference type="GO" id="GO:0051287">
    <property type="term" value="F:NAD binding"/>
    <property type="evidence" value="ECO:0007669"/>
    <property type="project" value="InterPro"/>
</dbReference>
<dbReference type="GO" id="GO:0046983">
    <property type="term" value="F:protein dimerization activity"/>
    <property type="evidence" value="ECO:0007669"/>
    <property type="project" value="InterPro"/>
</dbReference>
<dbReference type="GO" id="GO:0036001">
    <property type="term" value="P:'de novo' pyridoxal 5'-phosphate biosynthetic process"/>
    <property type="evidence" value="ECO:0007669"/>
    <property type="project" value="TreeGrafter"/>
</dbReference>
<dbReference type="GO" id="GO:0008615">
    <property type="term" value="P:pyridoxine biosynthetic process"/>
    <property type="evidence" value="ECO:0007669"/>
    <property type="project" value="UniProtKB-UniRule"/>
</dbReference>
<dbReference type="CDD" id="cd12158">
    <property type="entry name" value="ErythrP_dh"/>
    <property type="match status" value="1"/>
</dbReference>
<dbReference type="FunFam" id="3.30.1370.170:FF:000001">
    <property type="entry name" value="Erythronate-4-phosphate dehydrogenase"/>
    <property type="match status" value="1"/>
</dbReference>
<dbReference type="FunFam" id="3.40.50.720:FF:000093">
    <property type="entry name" value="Erythronate-4-phosphate dehydrogenase"/>
    <property type="match status" value="1"/>
</dbReference>
<dbReference type="Gene3D" id="3.30.1370.170">
    <property type="match status" value="1"/>
</dbReference>
<dbReference type="Gene3D" id="3.40.50.720">
    <property type="entry name" value="NAD(P)-binding Rossmann-like Domain"/>
    <property type="match status" value="2"/>
</dbReference>
<dbReference type="HAMAP" id="MF_01825">
    <property type="entry name" value="PdxB"/>
    <property type="match status" value="1"/>
</dbReference>
<dbReference type="InterPro" id="IPR006139">
    <property type="entry name" value="D-isomer_2_OHA_DH_cat_dom"/>
</dbReference>
<dbReference type="InterPro" id="IPR029753">
    <property type="entry name" value="D-isomer_DH_CS"/>
</dbReference>
<dbReference type="InterPro" id="IPR029752">
    <property type="entry name" value="D-isomer_DH_CS1"/>
</dbReference>
<dbReference type="InterPro" id="IPR006140">
    <property type="entry name" value="D-isomer_DH_NAD-bd"/>
</dbReference>
<dbReference type="InterPro" id="IPR020921">
    <property type="entry name" value="Erythronate-4-P_DHase"/>
</dbReference>
<dbReference type="InterPro" id="IPR024531">
    <property type="entry name" value="Erythronate-4-P_DHase_dimer"/>
</dbReference>
<dbReference type="InterPro" id="IPR036291">
    <property type="entry name" value="NAD(P)-bd_dom_sf"/>
</dbReference>
<dbReference type="InterPro" id="IPR038251">
    <property type="entry name" value="PdxB_dimer_sf"/>
</dbReference>
<dbReference type="NCBIfam" id="NF001309">
    <property type="entry name" value="PRK00257.1"/>
    <property type="match status" value="1"/>
</dbReference>
<dbReference type="NCBIfam" id="NF011966">
    <property type="entry name" value="PRK15438.1"/>
    <property type="match status" value="1"/>
</dbReference>
<dbReference type="PANTHER" id="PTHR42938">
    <property type="entry name" value="FORMATE DEHYDROGENASE 1"/>
    <property type="match status" value="1"/>
</dbReference>
<dbReference type="PANTHER" id="PTHR42938:SF9">
    <property type="entry name" value="FORMATE DEHYDROGENASE 1"/>
    <property type="match status" value="1"/>
</dbReference>
<dbReference type="Pfam" id="PF00389">
    <property type="entry name" value="2-Hacid_dh"/>
    <property type="match status" value="1"/>
</dbReference>
<dbReference type="Pfam" id="PF02826">
    <property type="entry name" value="2-Hacid_dh_C"/>
    <property type="match status" value="1"/>
</dbReference>
<dbReference type="Pfam" id="PF11890">
    <property type="entry name" value="DUF3410"/>
    <property type="match status" value="1"/>
</dbReference>
<dbReference type="SUPFAM" id="SSF52283">
    <property type="entry name" value="Formate/glycerate dehydrogenase catalytic domain-like"/>
    <property type="match status" value="1"/>
</dbReference>
<dbReference type="SUPFAM" id="SSF51735">
    <property type="entry name" value="NAD(P)-binding Rossmann-fold domains"/>
    <property type="match status" value="1"/>
</dbReference>
<dbReference type="PROSITE" id="PS00065">
    <property type="entry name" value="D_2_HYDROXYACID_DH_1"/>
    <property type="match status" value="1"/>
</dbReference>
<dbReference type="PROSITE" id="PS00671">
    <property type="entry name" value="D_2_HYDROXYACID_DH_3"/>
    <property type="match status" value="1"/>
</dbReference>
<comment type="function">
    <text evidence="1">Catalyzes the oxidation of erythronate-4-phosphate to 3-hydroxy-2-oxo-4-phosphonooxybutanoate.</text>
</comment>
<comment type="catalytic activity">
    <reaction evidence="1">
        <text>4-phospho-D-erythronate + NAD(+) = (R)-3-hydroxy-2-oxo-4-phosphooxybutanoate + NADH + H(+)</text>
        <dbReference type="Rhea" id="RHEA:18829"/>
        <dbReference type="ChEBI" id="CHEBI:15378"/>
        <dbReference type="ChEBI" id="CHEBI:57540"/>
        <dbReference type="ChEBI" id="CHEBI:57945"/>
        <dbReference type="ChEBI" id="CHEBI:58538"/>
        <dbReference type="ChEBI" id="CHEBI:58766"/>
        <dbReference type="EC" id="1.1.1.290"/>
    </reaction>
</comment>
<comment type="pathway">
    <text evidence="1">Cofactor biosynthesis; pyridoxine 5'-phosphate biosynthesis; pyridoxine 5'-phosphate from D-erythrose 4-phosphate: step 2/5.</text>
</comment>
<comment type="subunit">
    <text evidence="1">Homodimer.</text>
</comment>
<comment type="subcellular location">
    <subcellularLocation>
        <location evidence="1">Cytoplasm</location>
    </subcellularLocation>
</comment>
<comment type="similarity">
    <text evidence="1">Belongs to the D-isomer specific 2-hydroxyacid dehydrogenase family. PdxB subfamily.</text>
</comment>
<comment type="sequence caution" evidence="2">
    <conflict type="erroneous initiation">
        <sequence resource="EMBL-CDS" id="AAX66278"/>
    </conflict>
</comment>
<sequence>MKILVDENMPYARELFSRLGEVKAVPGRPIPVEELNHADALMVRSVTKVNESLLSGTPINFVGTATAGTDHVDEAWLKQAGIGFSAAPGCNAIAVVEYVFSALLMLAERDGFSLRDRTIGIVGVGNVGSRLQTRLEALGIRTLLCDPPRAARGDEGDFRTLDELVQEADVLTFHTPLYKDGPYKTLHLADETLIRRLKPGAILINACRGPVVDNAALLARLNAGQPLSVVLDVWEGEPDLNVALLEAVDIGTSHIAGYTLEGKARGTTQVFEAYSAFIGREQRVALETLLPAPEFGRITLHGPLDQPTLKRLAHLVYDVRRDDAPLRKVAGIPGEFDKLRKNYLERREWSSLYVMCDDETAAALLCKLGFNAVHHPAH</sequence>
<reference key="1">
    <citation type="journal article" date="2005" name="Nucleic Acids Res.">
        <title>The genome sequence of Salmonella enterica serovar Choleraesuis, a highly invasive and resistant zoonotic pathogen.</title>
        <authorList>
            <person name="Chiu C.-H."/>
            <person name="Tang P."/>
            <person name="Chu C."/>
            <person name="Hu S."/>
            <person name="Bao Q."/>
            <person name="Yu J."/>
            <person name="Chou Y.-Y."/>
            <person name="Wang H.-S."/>
            <person name="Lee Y.-S."/>
        </authorList>
    </citation>
    <scope>NUCLEOTIDE SEQUENCE [LARGE SCALE GENOMIC DNA]</scope>
    <source>
        <strain>SC-B67</strain>
    </source>
</reference>
<gene>
    <name evidence="1" type="primary">pdxB</name>
    <name type="ordered locus">SCH_2372</name>
</gene>
<organism>
    <name type="scientific">Salmonella choleraesuis (strain SC-B67)</name>
    <dbReference type="NCBI Taxonomy" id="321314"/>
    <lineage>
        <taxon>Bacteria</taxon>
        <taxon>Pseudomonadati</taxon>
        <taxon>Pseudomonadota</taxon>
        <taxon>Gammaproteobacteria</taxon>
        <taxon>Enterobacterales</taxon>
        <taxon>Enterobacteriaceae</taxon>
        <taxon>Salmonella</taxon>
    </lineage>
</organism>